<feature type="chain" id="PRO_0000199508" description="Multifunctional protein CAD">
    <location>
        <begin position="1"/>
        <end position="2242"/>
    </location>
</feature>
<feature type="domain" description="Glutamine amidotransferase type-1" evidence="9">
    <location>
        <begin position="177"/>
        <end position="363"/>
    </location>
</feature>
<feature type="domain" description="ATP-grasp 1" evidence="8">
    <location>
        <begin position="522"/>
        <end position="714"/>
    </location>
</feature>
<feature type="domain" description="ATP-grasp 2" evidence="8">
    <location>
        <begin position="1057"/>
        <end position="1248"/>
    </location>
</feature>
<feature type="domain" description="MGS-like" evidence="10">
    <location>
        <begin position="1313"/>
        <end position="1469"/>
    </location>
</feature>
<feature type="region of interest" description="GATase (Glutamine amidotransferase)" evidence="4">
    <location>
        <begin position="1"/>
        <end position="365"/>
    </location>
</feature>
<feature type="region of interest" description="Linker" evidence="4">
    <location>
        <begin position="366"/>
        <end position="397"/>
    </location>
</feature>
<feature type="region of interest" description="CPSase (Carbamoyl-phosphate synthase)" evidence="4">
    <location>
        <begin position="398"/>
        <end position="1462"/>
    </location>
</feature>
<feature type="region of interest" description="CPSase A" evidence="4">
    <location>
        <begin position="398"/>
        <end position="937"/>
    </location>
</feature>
<feature type="region of interest" description="CPSase B" evidence="4">
    <location>
        <begin position="938"/>
        <end position="1462"/>
    </location>
</feature>
<feature type="region of interest" description="DHOase (dihydroorotase)" evidence="4">
    <location>
        <begin position="1463"/>
        <end position="1796"/>
    </location>
</feature>
<feature type="region of interest" description="Linker" evidence="4">
    <location>
        <begin position="1797"/>
        <end position="1934"/>
    </location>
</feature>
<feature type="region of interest" description="Disordered" evidence="11">
    <location>
        <begin position="1829"/>
        <end position="1862"/>
    </location>
</feature>
<feature type="region of interest" description="ATCase (Aspartate transcarbamylase)" evidence="4">
    <location>
        <begin position="1935"/>
        <end position="2242"/>
    </location>
</feature>
<feature type="compositionally biased region" description="Polar residues" evidence="11">
    <location>
        <begin position="1840"/>
        <end position="1851"/>
    </location>
</feature>
<feature type="active site" description="Nucleophile; for GATase activity" evidence="9">
    <location>
        <position position="252"/>
    </location>
</feature>
<feature type="active site" description="For GATase activity" evidence="9">
    <location>
        <position position="336"/>
    </location>
</feature>
<feature type="active site" description="For GATase activity" evidence="9">
    <location>
        <position position="338"/>
    </location>
</feature>
<feature type="active site" description="For DHOase activity" evidence="2">
    <location>
        <position position="1693"/>
    </location>
</feature>
<feature type="binding site" evidence="5">
    <location>
        <position position="44"/>
    </location>
    <ligand>
        <name>L-glutamine</name>
        <dbReference type="ChEBI" id="CHEBI:58359"/>
    </ligand>
</feature>
<feature type="binding site" evidence="5">
    <location>
        <position position="222"/>
    </location>
    <ligand>
        <name>L-glutamine</name>
        <dbReference type="ChEBI" id="CHEBI:58359"/>
    </ligand>
</feature>
<feature type="binding site" evidence="5">
    <location>
        <position position="224"/>
    </location>
    <ligand>
        <name>L-glutamine</name>
        <dbReference type="ChEBI" id="CHEBI:58359"/>
    </ligand>
</feature>
<feature type="binding site" evidence="5">
    <location>
        <position position="253"/>
    </location>
    <ligand>
        <name>L-glutamine</name>
        <dbReference type="ChEBI" id="CHEBI:58359"/>
    </ligand>
</feature>
<feature type="binding site" evidence="5">
    <location>
        <position position="256"/>
    </location>
    <ligand>
        <name>L-glutamine</name>
        <dbReference type="ChEBI" id="CHEBI:58359"/>
    </ligand>
</feature>
<feature type="binding site" evidence="5">
    <location>
        <position position="294"/>
    </location>
    <ligand>
        <name>L-glutamine</name>
        <dbReference type="ChEBI" id="CHEBI:58359"/>
    </ligand>
</feature>
<feature type="binding site" evidence="5">
    <location>
        <position position="296"/>
    </location>
    <ligand>
        <name>L-glutamine</name>
        <dbReference type="ChEBI" id="CHEBI:58359"/>
    </ligand>
</feature>
<feature type="binding site" evidence="5">
    <location>
        <position position="297"/>
    </location>
    <ligand>
        <name>L-glutamine</name>
        <dbReference type="ChEBI" id="CHEBI:58359"/>
    </ligand>
</feature>
<feature type="binding site" evidence="1">
    <location>
        <position position="518"/>
    </location>
    <ligand>
        <name>ATP</name>
        <dbReference type="ChEBI" id="CHEBI:30616"/>
        <label>1</label>
    </ligand>
</feature>
<feature type="binding site" evidence="1">
    <location>
        <position position="558"/>
    </location>
    <ligand>
        <name>ATP</name>
        <dbReference type="ChEBI" id="CHEBI:30616"/>
        <label>1</label>
    </ligand>
</feature>
<feature type="binding site" evidence="1">
    <location>
        <position position="564"/>
    </location>
    <ligand>
        <name>ATP</name>
        <dbReference type="ChEBI" id="CHEBI:30616"/>
        <label>1</label>
    </ligand>
</feature>
<feature type="binding site" evidence="1">
    <location>
        <position position="565"/>
    </location>
    <ligand>
        <name>ATP</name>
        <dbReference type="ChEBI" id="CHEBI:30616"/>
        <label>1</label>
    </ligand>
</feature>
<feature type="binding site" evidence="1">
    <location>
        <position position="595"/>
    </location>
    <ligand>
        <name>ATP</name>
        <dbReference type="ChEBI" id="CHEBI:30616"/>
        <label>1</label>
    </ligand>
</feature>
<feature type="binding site" evidence="1">
    <location>
        <position position="602"/>
    </location>
    <ligand>
        <name>ATP</name>
        <dbReference type="ChEBI" id="CHEBI:30616"/>
        <label>1</label>
    </ligand>
</feature>
<feature type="binding site" evidence="1">
    <location>
        <position position="628"/>
    </location>
    <ligand>
        <name>ATP</name>
        <dbReference type="ChEBI" id="CHEBI:30616"/>
        <label>1</label>
    </ligand>
</feature>
<feature type="binding site" evidence="1">
    <location>
        <position position="629"/>
    </location>
    <ligand>
        <name>ATP</name>
        <dbReference type="ChEBI" id="CHEBI:30616"/>
        <label>1</label>
    </ligand>
</feature>
<feature type="binding site" evidence="1">
    <location>
        <position position="630"/>
    </location>
    <ligand>
        <name>ATP</name>
        <dbReference type="ChEBI" id="CHEBI:30616"/>
        <label>1</label>
    </ligand>
</feature>
<feature type="binding site" evidence="1">
    <location>
        <position position="671"/>
    </location>
    <ligand>
        <name>ATP</name>
        <dbReference type="ChEBI" id="CHEBI:30616"/>
        <label>1</label>
    </ligand>
</feature>
<feature type="binding site" evidence="8">
    <location>
        <position position="671"/>
    </location>
    <ligand>
        <name>Mg(2+)</name>
        <dbReference type="ChEBI" id="CHEBI:18420"/>
        <label>1</label>
    </ligand>
</feature>
<feature type="binding site" evidence="8">
    <location>
        <position position="671"/>
    </location>
    <ligand>
        <name>Mn(2+)</name>
        <dbReference type="ChEBI" id="CHEBI:29035"/>
        <label>1</label>
    </ligand>
</feature>
<feature type="binding site" evidence="1">
    <location>
        <position position="685"/>
    </location>
    <ligand>
        <name>ATP</name>
        <dbReference type="ChEBI" id="CHEBI:30616"/>
        <label>1</label>
    </ligand>
</feature>
<feature type="binding site" evidence="8">
    <location>
        <position position="685"/>
    </location>
    <ligand>
        <name>Mg(2+)</name>
        <dbReference type="ChEBI" id="CHEBI:18420"/>
        <label>1</label>
    </ligand>
</feature>
<feature type="binding site" evidence="8">
    <location>
        <position position="685"/>
    </location>
    <ligand>
        <name>Mg(2+)</name>
        <dbReference type="ChEBI" id="CHEBI:18420"/>
        <label>2</label>
    </ligand>
</feature>
<feature type="binding site" evidence="8">
    <location>
        <position position="685"/>
    </location>
    <ligand>
        <name>Mn(2+)</name>
        <dbReference type="ChEBI" id="CHEBI:29035"/>
        <label>1</label>
    </ligand>
</feature>
<feature type="binding site" evidence="8">
    <location>
        <position position="685"/>
    </location>
    <ligand>
        <name>Mn(2+)</name>
        <dbReference type="ChEBI" id="CHEBI:29035"/>
        <label>2</label>
    </ligand>
</feature>
<feature type="binding site" evidence="8">
    <location>
        <position position="687"/>
    </location>
    <ligand>
        <name>Mg(2+)</name>
        <dbReference type="ChEBI" id="CHEBI:18420"/>
        <label>2</label>
    </ligand>
</feature>
<feature type="binding site" evidence="8">
    <location>
        <position position="687"/>
    </location>
    <ligand>
        <name>Mn(2+)</name>
        <dbReference type="ChEBI" id="CHEBI:29035"/>
        <label>2</label>
    </ligand>
</feature>
<feature type="binding site" evidence="1">
    <location>
        <position position="1093"/>
    </location>
    <ligand>
        <name>ATP</name>
        <dbReference type="ChEBI" id="CHEBI:30616"/>
        <label>2</label>
    </ligand>
</feature>
<feature type="binding site" evidence="1">
    <location>
        <position position="1132"/>
    </location>
    <ligand>
        <name>ATP</name>
        <dbReference type="ChEBI" id="CHEBI:30616"/>
        <label>2</label>
    </ligand>
</feature>
<feature type="binding site" evidence="1">
    <location>
        <position position="1134"/>
    </location>
    <ligand>
        <name>ATP</name>
        <dbReference type="ChEBI" id="CHEBI:30616"/>
        <label>2</label>
    </ligand>
</feature>
<feature type="binding site" evidence="1">
    <location>
        <position position="1139"/>
    </location>
    <ligand>
        <name>ATP</name>
        <dbReference type="ChEBI" id="CHEBI:30616"/>
        <label>2</label>
    </ligand>
</feature>
<feature type="binding site" evidence="1">
    <location>
        <position position="1164"/>
    </location>
    <ligand>
        <name>ATP</name>
        <dbReference type="ChEBI" id="CHEBI:30616"/>
        <label>2</label>
    </ligand>
</feature>
<feature type="binding site" evidence="1">
    <location>
        <position position="1165"/>
    </location>
    <ligand>
        <name>ATP</name>
        <dbReference type="ChEBI" id="CHEBI:30616"/>
        <label>2</label>
    </ligand>
</feature>
<feature type="binding site" evidence="1">
    <location>
        <position position="1166"/>
    </location>
    <ligand>
        <name>ATP</name>
        <dbReference type="ChEBI" id="CHEBI:30616"/>
        <label>2</label>
    </ligand>
</feature>
<feature type="binding site" evidence="1">
    <location>
        <position position="1167"/>
    </location>
    <ligand>
        <name>ATP</name>
        <dbReference type="ChEBI" id="CHEBI:30616"/>
        <label>2</label>
    </ligand>
</feature>
<feature type="binding site" evidence="1">
    <location>
        <position position="1207"/>
    </location>
    <ligand>
        <name>ATP</name>
        <dbReference type="ChEBI" id="CHEBI:30616"/>
        <label>2</label>
    </ligand>
</feature>
<feature type="binding site" evidence="8">
    <location>
        <position position="1207"/>
    </location>
    <ligand>
        <name>Mg(2+)</name>
        <dbReference type="ChEBI" id="CHEBI:18420"/>
        <label>3</label>
    </ligand>
</feature>
<feature type="binding site" evidence="8">
    <location>
        <position position="1207"/>
    </location>
    <ligand>
        <name>Mn(2+)</name>
        <dbReference type="ChEBI" id="CHEBI:29035"/>
        <label>3</label>
    </ligand>
</feature>
<feature type="binding site" evidence="1">
    <location>
        <position position="1219"/>
    </location>
    <ligand>
        <name>ATP</name>
        <dbReference type="ChEBI" id="CHEBI:30616"/>
        <label>2</label>
    </ligand>
</feature>
<feature type="binding site" evidence="8">
    <location>
        <position position="1219"/>
    </location>
    <ligand>
        <name>Mg(2+)</name>
        <dbReference type="ChEBI" id="CHEBI:18420"/>
        <label>3</label>
    </ligand>
</feature>
<feature type="binding site" evidence="8">
    <location>
        <position position="1219"/>
    </location>
    <ligand>
        <name>Mg(2+)</name>
        <dbReference type="ChEBI" id="CHEBI:18420"/>
        <label>4</label>
    </ligand>
</feature>
<feature type="binding site" evidence="8">
    <location>
        <position position="1219"/>
    </location>
    <ligand>
        <name>Mn(2+)</name>
        <dbReference type="ChEBI" id="CHEBI:29035"/>
        <label>3</label>
    </ligand>
</feature>
<feature type="binding site" evidence="8">
    <location>
        <position position="1219"/>
    </location>
    <ligand>
        <name>Mn(2+)</name>
        <dbReference type="ChEBI" id="CHEBI:29035"/>
        <label>4</label>
    </ligand>
</feature>
<feature type="binding site" evidence="8">
    <location>
        <position position="1221"/>
    </location>
    <ligand>
        <name>Mg(2+)</name>
        <dbReference type="ChEBI" id="CHEBI:18420"/>
        <label>4</label>
    </ligand>
</feature>
<feature type="binding site" evidence="8">
    <location>
        <position position="1221"/>
    </location>
    <ligand>
        <name>Mn(2+)</name>
        <dbReference type="ChEBI" id="CHEBI:29035"/>
        <label>4</label>
    </ligand>
</feature>
<feature type="binding site" evidence="7">
    <location>
        <position position="1478"/>
    </location>
    <ligand>
        <name>Zn(2+)</name>
        <dbReference type="ChEBI" id="CHEBI:29105"/>
        <label>1</label>
    </ligand>
</feature>
<feature type="binding site" evidence="7">
    <location>
        <position position="1478"/>
    </location>
    <ligand>
        <name>Zn(2+)</name>
        <dbReference type="ChEBI" id="CHEBI:29105"/>
        <label>2</label>
    </ligand>
</feature>
<feature type="binding site" evidence="7">
    <location>
        <position position="1480"/>
    </location>
    <ligand>
        <name>Zn(2+)</name>
        <dbReference type="ChEBI" id="CHEBI:29105"/>
        <label>1</label>
    </ligand>
</feature>
<feature type="binding site" evidence="7">
    <location>
        <position position="1482"/>
    </location>
    <ligand>
        <name>(S)-dihydroorotate</name>
        <dbReference type="ChEBI" id="CHEBI:30864"/>
    </ligand>
</feature>
<feature type="binding site" evidence="7">
    <location>
        <position position="1512"/>
    </location>
    <ligand>
        <name>(S)-dihydroorotate</name>
        <dbReference type="ChEBI" id="CHEBI:30864"/>
    </ligand>
</feature>
<feature type="binding site" description="via carbamate group" evidence="7">
    <location>
        <position position="1563"/>
    </location>
    <ligand>
        <name>Zn(2+)</name>
        <dbReference type="ChEBI" id="CHEBI:29105"/>
        <label>1</label>
    </ligand>
</feature>
<feature type="binding site" description="via carbamate group" evidence="7">
    <location>
        <position position="1563"/>
    </location>
    <ligand>
        <name>Zn(2+)</name>
        <dbReference type="ChEBI" id="CHEBI:29105"/>
        <label>3</label>
    </ligand>
</feature>
<feature type="binding site" evidence="7">
    <location>
        <position position="1597"/>
    </location>
    <ligand>
        <name>Zn(2+)</name>
        <dbReference type="ChEBI" id="CHEBI:29105"/>
        <label>3</label>
    </ligand>
</feature>
<feature type="binding site" evidence="7">
    <location>
        <position position="1620"/>
    </location>
    <ligand>
        <name>Zn(2+)</name>
        <dbReference type="ChEBI" id="CHEBI:29105"/>
        <label>2</label>
    </ligand>
</feature>
<feature type="binding site" evidence="7">
    <location>
        <position position="1621"/>
    </location>
    <ligand>
        <name>Zn(2+)</name>
        <dbReference type="ChEBI" id="CHEBI:29105"/>
        <label>3</label>
    </ligand>
</feature>
<feature type="binding site" evidence="7">
    <location>
        <position position="1644"/>
    </location>
    <ligand>
        <name>Zn(2+)</name>
        <dbReference type="ChEBI" id="CHEBI:29105"/>
        <label>2</label>
    </ligand>
</feature>
<feature type="binding site" evidence="7">
    <location>
        <position position="1668"/>
    </location>
    <ligand>
        <name>(S)-dihydroorotate</name>
        <dbReference type="ChEBI" id="CHEBI:30864"/>
    </ligand>
</feature>
<feature type="binding site" evidence="7">
    <location>
        <position position="1693"/>
    </location>
    <ligand>
        <name>Zn(2+)</name>
        <dbReference type="ChEBI" id="CHEBI:29105"/>
        <label>1</label>
    </ligand>
</feature>
<feature type="binding site" evidence="7">
    <location>
        <position position="1697"/>
    </location>
    <ligand>
        <name>(S)-dihydroorotate</name>
        <dbReference type="ChEBI" id="CHEBI:30864"/>
    </ligand>
</feature>
<feature type="binding site" evidence="7">
    <location>
        <position position="1709"/>
    </location>
    <ligand>
        <name>(S)-dihydroorotate</name>
        <dbReference type="ChEBI" id="CHEBI:30864"/>
    </ligand>
</feature>
<feature type="binding site" evidence="6">
    <location>
        <position position="1992"/>
    </location>
    <ligand>
        <name>carbamoyl phosphate</name>
        <dbReference type="ChEBI" id="CHEBI:58228"/>
    </ligand>
</feature>
<feature type="binding site" evidence="6">
    <location>
        <position position="1993"/>
    </location>
    <ligand>
        <name>carbamoyl phosphate</name>
        <dbReference type="ChEBI" id="CHEBI:58228"/>
    </ligand>
</feature>
<feature type="binding site" evidence="6">
    <location>
        <position position="2020"/>
    </location>
    <ligand>
        <name>L-aspartate</name>
        <dbReference type="ChEBI" id="CHEBI:29991"/>
    </ligand>
</feature>
<feature type="binding site" evidence="6">
    <location>
        <position position="2041"/>
    </location>
    <ligand>
        <name>carbamoyl phosphate</name>
        <dbReference type="ChEBI" id="CHEBI:58228"/>
    </ligand>
</feature>
<feature type="binding site" evidence="6">
    <location>
        <position position="2069"/>
    </location>
    <ligand>
        <name>carbamoyl phosphate</name>
        <dbReference type="ChEBI" id="CHEBI:58228"/>
    </ligand>
</feature>
<feature type="binding site" evidence="6">
    <location>
        <position position="2072"/>
    </location>
    <ligand>
        <name>carbamoyl phosphate</name>
        <dbReference type="ChEBI" id="CHEBI:58228"/>
    </ligand>
</feature>
<feature type="binding site" evidence="6">
    <location>
        <position position="2102"/>
    </location>
    <ligand>
        <name>L-aspartate</name>
        <dbReference type="ChEBI" id="CHEBI:29991"/>
    </ligand>
</feature>
<feature type="binding site" evidence="6">
    <location>
        <position position="2163"/>
    </location>
    <ligand>
        <name>L-aspartate</name>
        <dbReference type="ChEBI" id="CHEBI:29991"/>
    </ligand>
</feature>
<feature type="binding site" evidence="6">
    <location>
        <position position="2202"/>
    </location>
    <ligand>
        <name>carbamoyl phosphate</name>
        <dbReference type="ChEBI" id="CHEBI:58228"/>
    </ligand>
</feature>
<feature type="binding site" evidence="6">
    <location>
        <position position="2203"/>
    </location>
    <ligand>
        <name>carbamoyl phosphate</name>
        <dbReference type="ChEBI" id="CHEBI:58228"/>
    </ligand>
</feature>
<feature type="modified residue" description="N6-carboxylysine" evidence="7">
    <location>
        <position position="1563"/>
    </location>
</feature>
<keyword id="KW-0021">Allosteric enzyme</keyword>
<keyword id="KW-0067">ATP-binding</keyword>
<keyword id="KW-0963">Cytoplasm</keyword>
<keyword id="KW-0378">Hydrolase</keyword>
<keyword id="KW-0436">Ligase</keyword>
<keyword id="KW-0479">Metal-binding</keyword>
<keyword id="KW-0511">Multifunctional enzyme</keyword>
<keyword id="KW-0547">Nucleotide-binding</keyword>
<keyword id="KW-0539">Nucleus</keyword>
<keyword id="KW-0597">Phosphoprotein</keyword>
<keyword id="KW-0665">Pyrimidine biosynthesis</keyword>
<keyword id="KW-0677">Repeat</keyword>
<keyword id="KW-0808">Transferase</keyword>
<keyword id="KW-0862">Zinc</keyword>
<gene>
    <name type="primary">CAD</name>
</gene>
<dbReference type="EC" id="6.3.5.5" evidence="7"/>
<dbReference type="EC" id="3.5.1.2" evidence="3"/>
<dbReference type="EC" id="6.3.4.16" evidence="3"/>
<dbReference type="EC" id="2.1.3.2" evidence="7"/>
<dbReference type="EC" id="3.5.2.3" evidence="7"/>
<dbReference type="EMBL" id="U18868">
    <property type="protein sequence ID" value="AAA74569.1"/>
    <property type="molecule type" value="mRNA"/>
</dbReference>
<dbReference type="PIR" id="A57541">
    <property type="entry name" value="A57541"/>
</dbReference>
<dbReference type="SMR" id="Q91437"/>
<dbReference type="UniPathway" id="UPA00070">
    <property type="reaction ID" value="UER00115"/>
</dbReference>
<dbReference type="UniPathway" id="UPA00070">
    <property type="reaction ID" value="UER00116"/>
</dbReference>
<dbReference type="UniPathway" id="UPA00070">
    <property type="reaction ID" value="UER00117"/>
</dbReference>
<dbReference type="GO" id="GO:0005951">
    <property type="term" value="C:carbamoyl-phosphate synthase complex"/>
    <property type="evidence" value="ECO:0007669"/>
    <property type="project" value="TreeGrafter"/>
</dbReference>
<dbReference type="GO" id="GO:0005634">
    <property type="term" value="C:nucleus"/>
    <property type="evidence" value="ECO:0007669"/>
    <property type="project" value="UniProtKB-SubCell"/>
</dbReference>
<dbReference type="GO" id="GO:0016597">
    <property type="term" value="F:amino acid binding"/>
    <property type="evidence" value="ECO:0007669"/>
    <property type="project" value="InterPro"/>
</dbReference>
<dbReference type="GO" id="GO:0004070">
    <property type="term" value="F:aspartate carbamoyltransferase activity"/>
    <property type="evidence" value="ECO:0007669"/>
    <property type="project" value="UniProtKB-EC"/>
</dbReference>
<dbReference type="GO" id="GO:0005524">
    <property type="term" value="F:ATP binding"/>
    <property type="evidence" value="ECO:0007669"/>
    <property type="project" value="UniProtKB-KW"/>
</dbReference>
<dbReference type="GO" id="GO:0004087">
    <property type="term" value="F:carbamoyl-phosphate synthase (ammonia) activity"/>
    <property type="evidence" value="ECO:0007669"/>
    <property type="project" value="RHEA"/>
</dbReference>
<dbReference type="GO" id="GO:0004088">
    <property type="term" value="F:carbamoyl-phosphate synthase (glutamine-hydrolyzing) activity"/>
    <property type="evidence" value="ECO:0007669"/>
    <property type="project" value="UniProtKB-EC"/>
</dbReference>
<dbReference type="GO" id="GO:0004151">
    <property type="term" value="F:dihydroorotase activity"/>
    <property type="evidence" value="ECO:0000250"/>
    <property type="project" value="UniProtKB"/>
</dbReference>
<dbReference type="GO" id="GO:0004359">
    <property type="term" value="F:glutaminase activity"/>
    <property type="evidence" value="ECO:0007669"/>
    <property type="project" value="RHEA"/>
</dbReference>
<dbReference type="GO" id="GO:0008270">
    <property type="term" value="F:zinc ion binding"/>
    <property type="evidence" value="ECO:0000250"/>
    <property type="project" value="UniProtKB"/>
</dbReference>
<dbReference type="GO" id="GO:0006207">
    <property type="term" value="P:'de novo' pyrimidine nucleobase biosynthetic process"/>
    <property type="evidence" value="ECO:0000250"/>
    <property type="project" value="UniProtKB"/>
</dbReference>
<dbReference type="GO" id="GO:0044205">
    <property type="term" value="P:'de novo' UMP biosynthetic process"/>
    <property type="evidence" value="ECO:0007669"/>
    <property type="project" value="UniProtKB-UniPathway"/>
</dbReference>
<dbReference type="GO" id="GO:0006541">
    <property type="term" value="P:glutamine metabolic process"/>
    <property type="evidence" value="ECO:0007669"/>
    <property type="project" value="InterPro"/>
</dbReference>
<dbReference type="GO" id="GO:0006526">
    <property type="term" value="P:L-arginine biosynthetic process"/>
    <property type="evidence" value="ECO:0007669"/>
    <property type="project" value="TreeGrafter"/>
</dbReference>
<dbReference type="CDD" id="cd01316">
    <property type="entry name" value="CAD_DHOase"/>
    <property type="match status" value="1"/>
</dbReference>
<dbReference type="CDD" id="cd01744">
    <property type="entry name" value="GATase1_CPSase"/>
    <property type="match status" value="1"/>
</dbReference>
<dbReference type="CDD" id="cd01423">
    <property type="entry name" value="MGS_CPS_I_III"/>
    <property type="match status" value="1"/>
</dbReference>
<dbReference type="FunFam" id="3.40.50.1370:FF:000002">
    <property type="entry name" value="Aspartate carbamoyltransferase 2"/>
    <property type="match status" value="1"/>
</dbReference>
<dbReference type="FunFam" id="3.20.20.140:FF:000015">
    <property type="entry name" value="CAD protein isoform X2"/>
    <property type="match status" value="1"/>
</dbReference>
<dbReference type="FunFam" id="3.40.50.1370:FF:000005">
    <property type="entry name" value="CAD protein-like isoform X1"/>
    <property type="match status" value="1"/>
</dbReference>
<dbReference type="FunFam" id="3.40.50.1380:FF:000005">
    <property type="entry name" value="CAD protein-like isoform X1"/>
    <property type="match status" value="1"/>
</dbReference>
<dbReference type="FunFam" id="3.30.470.20:FF:000004">
    <property type="entry name" value="Carbamoyl-phosphate synthase (glutamine-hydrolyzing)"/>
    <property type="match status" value="1"/>
</dbReference>
<dbReference type="FunFam" id="3.40.50.20:FF:000012">
    <property type="entry name" value="Carbamoyl-phosphate synthase 1, mitochondrial"/>
    <property type="match status" value="1"/>
</dbReference>
<dbReference type="FunFam" id="3.40.50.880:FF:000006">
    <property type="entry name" value="Carbamoyl-phosphate synthase 1, mitochondrial"/>
    <property type="match status" value="1"/>
</dbReference>
<dbReference type="FunFam" id="3.50.30.20:FF:000002">
    <property type="entry name" value="Carbamoyl-phosphate synthase 1, mitochondrial"/>
    <property type="match status" value="1"/>
</dbReference>
<dbReference type="FunFam" id="1.10.1030.10:FF:000001">
    <property type="entry name" value="Carbamoyl-phosphate synthase large chain"/>
    <property type="match status" value="1"/>
</dbReference>
<dbReference type="FunFam" id="3.30.1490.20:FF:000001">
    <property type="entry name" value="Carbamoyl-phosphate synthase large chain"/>
    <property type="match status" value="1"/>
</dbReference>
<dbReference type="FunFam" id="3.30.470.20:FF:000001">
    <property type="entry name" value="Carbamoyl-phosphate synthase large chain"/>
    <property type="match status" value="1"/>
</dbReference>
<dbReference type="FunFam" id="3.40.50.20:FF:000002">
    <property type="entry name" value="Carbamoyl-phosphate synthase large chain"/>
    <property type="match status" value="1"/>
</dbReference>
<dbReference type="Gene3D" id="3.40.50.20">
    <property type="match status" value="2"/>
</dbReference>
<dbReference type="Gene3D" id="3.40.50.880">
    <property type="match status" value="1"/>
</dbReference>
<dbReference type="Gene3D" id="3.40.50.1370">
    <property type="entry name" value="Aspartate/ornithine carbamoyltransferase"/>
    <property type="match status" value="2"/>
</dbReference>
<dbReference type="Gene3D" id="3.30.1490.20">
    <property type="entry name" value="ATP-grasp fold, A domain"/>
    <property type="match status" value="1"/>
</dbReference>
<dbReference type="Gene3D" id="3.30.470.20">
    <property type="entry name" value="ATP-grasp fold, B domain"/>
    <property type="match status" value="2"/>
</dbReference>
<dbReference type="Gene3D" id="3.50.30.20">
    <property type="entry name" value="Carbamoyl-phosphate synthase small subunit, N-terminal domain"/>
    <property type="match status" value="1"/>
</dbReference>
<dbReference type="Gene3D" id="1.10.1030.10">
    <property type="entry name" value="Carbamoyl-phosphate synthetase, large subunit oligomerisation domain"/>
    <property type="match status" value="1"/>
</dbReference>
<dbReference type="Gene3D" id="3.20.20.140">
    <property type="entry name" value="Metal-dependent hydrolases"/>
    <property type="match status" value="1"/>
</dbReference>
<dbReference type="Gene3D" id="3.40.50.1380">
    <property type="entry name" value="Methylglyoxal synthase-like domain"/>
    <property type="match status" value="1"/>
</dbReference>
<dbReference type="HAMAP" id="MF_00001">
    <property type="entry name" value="Asp_carb_tr"/>
    <property type="match status" value="1"/>
</dbReference>
<dbReference type="HAMAP" id="MF_01209">
    <property type="entry name" value="CPSase_S_chain"/>
    <property type="match status" value="1"/>
</dbReference>
<dbReference type="InterPro" id="IPR006680">
    <property type="entry name" value="Amidohydro-rel"/>
</dbReference>
<dbReference type="InterPro" id="IPR006132">
    <property type="entry name" value="Asp/Orn_carbamoyltranf_P-bd"/>
</dbReference>
<dbReference type="InterPro" id="IPR006130">
    <property type="entry name" value="Asp/Orn_carbamoylTrfase"/>
</dbReference>
<dbReference type="InterPro" id="IPR036901">
    <property type="entry name" value="Asp/Orn_carbamoylTrfase_sf"/>
</dbReference>
<dbReference type="InterPro" id="IPR002082">
    <property type="entry name" value="Asp_carbamoyltransf"/>
</dbReference>
<dbReference type="InterPro" id="IPR006131">
    <property type="entry name" value="Asp_carbamoyltransf_Asp/Orn-bd"/>
</dbReference>
<dbReference type="InterPro" id="IPR011761">
    <property type="entry name" value="ATP-grasp"/>
</dbReference>
<dbReference type="InterPro" id="IPR013815">
    <property type="entry name" value="ATP_grasp_subdomain_1"/>
</dbReference>
<dbReference type="InterPro" id="IPR006275">
    <property type="entry name" value="CarbamoylP_synth_lsu"/>
</dbReference>
<dbReference type="InterPro" id="IPR005480">
    <property type="entry name" value="CarbamoylP_synth_lsu_oligo"/>
</dbReference>
<dbReference type="InterPro" id="IPR036897">
    <property type="entry name" value="CarbamoylP_synth_lsu_oligo_sf"/>
</dbReference>
<dbReference type="InterPro" id="IPR006274">
    <property type="entry name" value="CarbamoylP_synth_ssu"/>
</dbReference>
<dbReference type="InterPro" id="IPR002474">
    <property type="entry name" value="CarbamoylP_synth_ssu_N"/>
</dbReference>
<dbReference type="InterPro" id="IPR036480">
    <property type="entry name" value="CarbP_synth_ssu_N_sf"/>
</dbReference>
<dbReference type="InterPro" id="IPR005479">
    <property type="entry name" value="CbamoylP_synth_lsu-like_ATP-bd"/>
</dbReference>
<dbReference type="InterPro" id="IPR005483">
    <property type="entry name" value="CbamoylP_synth_lsu_CPSase_dom"/>
</dbReference>
<dbReference type="InterPro" id="IPR029062">
    <property type="entry name" value="Class_I_gatase-like"/>
</dbReference>
<dbReference type="InterPro" id="IPR035686">
    <property type="entry name" value="CPSase_GATase1"/>
</dbReference>
<dbReference type="InterPro" id="IPR002195">
    <property type="entry name" value="Dihydroorotase_CS"/>
</dbReference>
<dbReference type="InterPro" id="IPR017926">
    <property type="entry name" value="GATASE"/>
</dbReference>
<dbReference type="InterPro" id="IPR011059">
    <property type="entry name" value="Metal-dep_hydrolase_composite"/>
</dbReference>
<dbReference type="InterPro" id="IPR032466">
    <property type="entry name" value="Metal_Hydrolase"/>
</dbReference>
<dbReference type="InterPro" id="IPR011607">
    <property type="entry name" value="MGS-like_dom"/>
</dbReference>
<dbReference type="InterPro" id="IPR036914">
    <property type="entry name" value="MGS-like_dom_sf"/>
</dbReference>
<dbReference type="InterPro" id="IPR016185">
    <property type="entry name" value="PreATP-grasp_dom_sf"/>
</dbReference>
<dbReference type="NCBIfam" id="TIGR00670">
    <property type="entry name" value="asp_carb_tr"/>
    <property type="match status" value="1"/>
</dbReference>
<dbReference type="NCBIfam" id="TIGR01369">
    <property type="entry name" value="CPSaseII_lrg"/>
    <property type="match status" value="1"/>
</dbReference>
<dbReference type="NCBIfam" id="TIGR01368">
    <property type="entry name" value="CPSaseIIsmall"/>
    <property type="match status" value="1"/>
</dbReference>
<dbReference type="NCBIfam" id="NF002032">
    <property type="entry name" value="PRK00856.1"/>
    <property type="match status" value="1"/>
</dbReference>
<dbReference type="NCBIfam" id="NF003671">
    <property type="entry name" value="PRK05294.1"/>
    <property type="match status" value="1"/>
</dbReference>
<dbReference type="NCBIfam" id="NF009455">
    <property type="entry name" value="PRK12815.1"/>
    <property type="match status" value="1"/>
</dbReference>
<dbReference type="NCBIfam" id="NF009475">
    <property type="entry name" value="PRK12838.1"/>
    <property type="match status" value="1"/>
</dbReference>
<dbReference type="PANTHER" id="PTHR11405:SF4">
    <property type="entry name" value="CARBAMOYL-PHOSPHATE SYNTHASE ARGININE-SPECIFIC SMALL CHAIN"/>
    <property type="match status" value="1"/>
</dbReference>
<dbReference type="PANTHER" id="PTHR11405">
    <property type="entry name" value="CARBAMOYLTRANSFERASE FAMILY MEMBER"/>
    <property type="match status" value="1"/>
</dbReference>
<dbReference type="Pfam" id="PF01979">
    <property type="entry name" value="Amidohydro_1"/>
    <property type="match status" value="1"/>
</dbReference>
<dbReference type="Pfam" id="PF02786">
    <property type="entry name" value="CPSase_L_D2"/>
    <property type="match status" value="2"/>
</dbReference>
<dbReference type="Pfam" id="PF02787">
    <property type="entry name" value="CPSase_L_D3"/>
    <property type="match status" value="1"/>
</dbReference>
<dbReference type="Pfam" id="PF00988">
    <property type="entry name" value="CPSase_sm_chain"/>
    <property type="match status" value="1"/>
</dbReference>
<dbReference type="Pfam" id="PF00117">
    <property type="entry name" value="GATase"/>
    <property type="match status" value="1"/>
</dbReference>
<dbReference type="Pfam" id="PF02142">
    <property type="entry name" value="MGS"/>
    <property type="match status" value="1"/>
</dbReference>
<dbReference type="Pfam" id="PF00185">
    <property type="entry name" value="OTCace"/>
    <property type="match status" value="1"/>
</dbReference>
<dbReference type="Pfam" id="PF02729">
    <property type="entry name" value="OTCace_N"/>
    <property type="match status" value="1"/>
</dbReference>
<dbReference type="PRINTS" id="PR00100">
    <property type="entry name" value="AOTCASE"/>
</dbReference>
<dbReference type="PRINTS" id="PR00101">
    <property type="entry name" value="ATCASE"/>
</dbReference>
<dbReference type="PRINTS" id="PR00098">
    <property type="entry name" value="CPSASE"/>
</dbReference>
<dbReference type="PRINTS" id="PR00099">
    <property type="entry name" value="CPSGATASE"/>
</dbReference>
<dbReference type="SMART" id="SM01096">
    <property type="entry name" value="CPSase_L_D3"/>
    <property type="match status" value="1"/>
</dbReference>
<dbReference type="SMART" id="SM01097">
    <property type="entry name" value="CPSase_sm_chain"/>
    <property type="match status" value="1"/>
</dbReference>
<dbReference type="SMART" id="SM00851">
    <property type="entry name" value="MGS"/>
    <property type="match status" value="1"/>
</dbReference>
<dbReference type="SUPFAM" id="SSF53671">
    <property type="entry name" value="Aspartate/ornithine carbamoyltransferase"/>
    <property type="match status" value="1"/>
</dbReference>
<dbReference type="SUPFAM" id="SSF48108">
    <property type="entry name" value="Carbamoyl phosphate synthetase, large subunit connection domain"/>
    <property type="match status" value="1"/>
</dbReference>
<dbReference type="SUPFAM" id="SSF52021">
    <property type="entry name" value="Carbamoyl phosphate synthetase, small subunit N-terminal domain"/>
    <property type="match status" value="1"/>
</dbReference>
<dbReference type="SUPFAM" id="SSF52317">
    <property type="entry name" value="Class I glutamine amidotransferase-like"/>
    <property type="match status" value="1"/>
</dbReference>
<dbReference type="SUPFAM" id="SSF51338">
    <property type="entry name" value="Composite domain of metallo-dependent hydrolases"/>
    <property type="match status" value="1"/>
</dbReference>
<dbReference type="SUPFAM" id="SSF56059">
    <property type="entry name" value="Glutathione synthetase ATP-binding domain-like"/>
    <property type="match status" value="2"/>
</dbReference>
<dbReference type="SUPFAM" id="SSF51556">
    <property type="entry name" value="Metallo-dependent hydrolases"/>
    <property type="match status" value="1"/>
</dbReference>
<dbReference type="SUPFAM" id="SSF52335">
    <property type="entry name" value="Methylglyoxal synthase-like"/>
    <property type="match status" value="1"/>
</dbReference>
<dbReference type="SUPFAM" id="SSF52440">
    <property type="entry name" value="PreATP-grasp domain"/>
    <property type="match status" value="2"/>
</dbReference>
<dbReference type="PROSITE" id="PS50975">
    <property type="entry name" value="ATP_GRASP"/>
    <property type="match status" value="2"/>
</dbReference>
<dbReference type="PROSITE" id="PS00097">
    <property type="entry name" value="CARBAMOYLTRANSFERASE"/>
    <property type="match status" value="1"/>
</dbReference>
<dbReference type="PROSITE" id="PS00866">
    <property type="entry name" value="CPSASE_1"/>
    <property type="match status" value="2"/>
</dbReference>
<dbReference type="PROSITE" id="PS00867">
    <property type="entry name" value="CPSASE_2"/>
    <property type="match status" value="2"/>
</dbReference>
<dbReference type="PROSITE" id="PS00482">
    <property type="entry name" value="DIHYDROOROTASE_1"/>
    <property type="match status" value="1"/>
</dbReference>
<dbReference type="PROSITE" id="PS00483">
    <property type="entry name" value="DIHYDROOROTASE_2"/>
    <property type="match status" value="1"/>
</dbReference>
<dbReference type="PROSITE" id="PS51273">
    <property type="entry name" value="GATASE_TYPE_1"/>
    <property type="match status" value="1"/>
</dbReference>
<dbReference type="PROSITE" id="PS51855">
    <property type="entry name" value="MGS"/>
    <property type="match status" value="1"/>
</dbReference>
<proteinExistence type="evidence at transcript level"/>
<protein>
    <recommendedName>
        <fullName evidence="13">Multifunctional protein CAD</fullName>
    </recommendedName>
    <alternativeName>
        <fullName>Carbamoyl phosphate synthetase 2-aspartate transcarbamylase-dihydroorotase</fullName>
    </alternativeName>
    <domain>
        <recommendedName>
            <fullName>Glutamine-dependent carbamoyl-phosphate synthase</fullName>
            <ecNumber evidence="7">6.3.5.5</ecNumber>
        </recommendedName>
    </domain>
    <domain>
        <recommendedName>
            <fullName>Glutamine amidotransferase</fullName>
            <shortName>GATase</shortName>
            <shortName>GLNase</shortName>
            <ecNumber evidence="3">3.5.1.2</ecNumber>
        </recommendedName>
    </domain>
    <domain>
        <recommendedName>
            <fullName>Ammonium-dependent carbamoyl phosphate synthase</fullName>
            <shortName>CPS</shortName>
            <shortName>CPSase</shortName>
            <ecNumber evidence="3">6.3.4.16</ecNumber>
        </recommendedName>
    </domain>
    <domain>
        <recommendedName>
            <fullName>Aspartate carbamoyltransferase</fullName>
            <ecNumber evidence="7">2.1.3.2</ecNumber>
        </recommendedName>
    </domain>
    <domain>
        <recommendedName>
            <fullName>Dihydroorotase</fullName>
            <ecNumber evidence="7">3.5.2.3</ecNumber>
        </recommendedName>
    </domain>
</protein>
<organism>
    <name type="scientific">Squalus acanthias</name>
    <name type="common">Spiny dogfish</name>
    <dbReference type="NCBI Taxonomy" id="7797"/>
    <lineage>
        <taxon>Eukaryota</taxon>
        <taxon>Metazoa</taxon>
        <taxon>Chordata</taxon>
        <taxon>Craniata</taxon>
        <taxon>Vertebrata</taxon>
        <taxon>Chondrichthyes</taxon>
        <taxon>Elasmobranchii</taxon>
        <taxon>Squalomorphii</taxon>
        <taxon>Squaliformes</taxon>
        <taxon>Squalidae</taxon>
        <taxon>Squalus</taxon>
    </lineage>
</organism>
<comment type="function">
    <text evidence="7">Multifunctional protein that encodes the first 3 enzymatic activities of the de novo pyrimidine pathway: carbamoylphosphate synthetase (CPSase; EC 6.3.5.5), aspartate transcarbamylase (ATCase; EC 2.1.3.2) and dihydroorotase (DHOase; EC 3.5.2.3). The CPSase-function is accomplished in 2 steps, by a glutamine-dependent amidotransferase activity (GATase) that binds and cleaves glutamine to produce ammonia, followed by an ammonium-dependent carbamoyl phosphate synthetase, which reacts with the ammonia, hydrogencarbonate and ATP to form carbamoyl phosphate. The endogenously produced carbamoyl phosphate is sequestered and channeled to the ATCase active site. ATCase then catalyzes the formation of carbamoyl-L-aspartate from L-aspartate and carbamoyl phosphate. In the last step, DHOase catalyzes the cyclization of carbamoyl aspartate to dihydroorotate.</text>
</comment>
<comment type="catalytic activity">
    <reaction evidence="7">
        <text>hydrogencarbonate + L-glutamine + 2 ATP + H2O = carbamoyl phosphate + L-glutamate + 2 ADP + phosphate + 2 H(+)</text>
        <dbReference type="Rhea" id="RHEA:18633"/>
        <dbReference type="ChEBI" id="CHEBI:15377"/>
        <dbReference type="ChEBI" id="CHEBI:15378"/>
        <dbReference type="ChEBI" id="CHEBI:17544"/>
        <dbReference type="ChEBI" id="CHEBI:29985"/>
        <dbReference type="ChEBI" id="CHEBI:30616"/>
        <dbReference type="ChEBI" id="CHEBI:43474"/>
        <dbReference type="ChEBI" id="CHEBI:58228"/>
        <dbReference type="ChEBI" id="CHEBI:58359"/>
        <dbReference type="ChEBI" id="CHEBI:456216"/>
        <dbReference type="EC" id="6.3.5.5"/>
    </reaction>
</comment>
<comment type="catalytic activity">
    <reaction evidence="3">
        <text>L-glutamine + H2O = L-glutamate + NH4(+)</text>
        <dbReference type="Rhea" id="RHEA:15889"/>
        <dbReference type="ChEBI" id="CHEBI:15377"/>
        <dbReference type="ChEBI" id="CHEBI:28938"/>
        <dbReference type="ChEBI" id="CHEBI:29985"/>
        <dbReference type="ChEBI" id="CHEBI:58359"/>
        <dbReference type="EC" id="3.5.1.2"/>
    </reaction>
</comment>
<comment type="catalytic activity">
    <reaction evidence="3">
        <text>hydrogencarbonate + NH4(+) + 2 ATP = carbamoyl phosphate + 2 ADP + phosphate + 2 H(+)</text>
        <dbReference type="Rhea" id="RHEA:18029"/>
        <dbReference type="ChEBI" id="CHEBI:15378"/>
        <dbReference type="ChEBI" id="CHEBI:17544"/>
        <dbReference type="ChEBI" id="CHEBI:28938"/>
        <dbReference type="ChEBI" id="CHEBI:30616"/>
        <dbReference type="ChEBI" id="CHEBI:43474"/>
        <dbReference type="ChEBI" id="CHEBI:58228"/>
        <dbReference type="ChEBI" id="CHEBI:456216"/>
        <dbReference type="EC" id="6.3.4.16"/>
    </reaction>
</comment>
<comment type="catalytic activity">
    <reaction evidence="7">
        <text>carbamoyl phosphate + L-aspartate = N-carbamoyl-L-aspartate + phosphate + H(+)</text>
        <dbReference type="Rhea" id="RHEA:20013"/>
        <dbReference type="ChEBI" id="CHEBI:15378"/>
        <dbReference type="ChEBI" id="CHEBI:29991"/>
        <dbReference type="ChEBI" id="CHEBI:32814"/>
        <dbReference type="ChEBI" id="CHEBI:43474"/>
        <dbReference type="ChEBI" id="CHEBI:58228"/>
        <dbReference type="EC" id="2.1.3.2"/>
    </reaction>
</comment>
<comment type="catalytic activity">
    <reaction evidence="7">
        <text>(S)-dihydroorotate + H2O = N-carbamoyl-L-aspartate + H(+)</text>
        <dbReference type="Rhea" id="RHEA:24296"/>
        <dbReference type="ChEBI" id="CHEBI:15377"/>
        <dbReference type="ChEBI" id="CHEBI:15378"/>
        <dbReference type="ChEBI" id="CHEBI:30864"/>
        <dbReference type="ChEBI" id="CHEBI:32814"/>
        <dbReference type="EC" id="3.5.2.3"/>
    </reaction>
</comment>
<comment type="cofactor">
    <cofactor evidence="8">
        <name>Mg(2+)</name>
        <dbReference type="ChEBI" id="CHEBI:18420"/>
    </cofactor>
    <cofactor evidence="8">
        <name>Mn(2+)</name>
        <dbReference type="ChEBI" id="CHEBI:29035"/>
    </cofactor>
    <text evidence="8">Binds 4 Mg(2+) or Mn(2+) ions per subunit.</text>
</comment>
<comment type="cofactor">
    <cofactor evidence="7">
        <name>Zn(2+)</name>
        <dbReference type="ChEBI" id="CHEBI:29105"/>
    </cofactor>
    <text evidence="7">Binds 3 Zn(2+) ions per subunit (for dihydroorotase activity).</text>
</comment>
<comment type="activity regulation">
    <text evidence="7">Allosterically regulated and controlled by phosphorylation. 5-phosphoribose 1-diphosphate is an activator while UMP is an inhibitor of the CPSase reaction.</text>
</comment>
<comment type="pathway">
    <text evidence="7">Pyrimidine metabolism; UMP biosynthesis via de novo pathway; (S)-dihydroorotate from bicarbonate: step 1/3.</text>
</comment>
<comment type="pathway">
    <text evidence="7">Pyrimidine metabolism; UMP biosynthesis via de novo pathway; (S)-dihydroorotate from bicarbonate: step 2/3.</text>
</comment>
<comment type="pathway">
    <text evidence="7">Pyrimidine metabolism; UMP biosynthesis via de novo pathway; (S)-dihydroorotate from bicarbonate: step 3/3.</text>
</comment>
<comment type="subunit">
    <text evidence="7">Homohexamer.</text>
</comment>
<comment type="subcellular location">
    <subcellularLocation>
        <location evidence="7">Cytoplasm</location>
    </subcellularLocation>
    <subcellularLocation>
        <location evidence="7">Nucleus</location>
    </subcellularLocation>
</comment>
<comment type="tissue specificity">
    <text evidence="12">Present in the testis but not in the liver.</text>
</comment>
<comment type="miscellaneous">
    <text evidence="3">GATase (glutamine amidotransferase) and CPSase (carbamoyl phosphate synthase) form together the glutamine-dependent CPSase (GD-CPSase) (EC 6.3.5.5).</text>
</comment>
<comment type="similarity">
    <text evidence="13">In the N-terminal section; belongs to the CarA family.</text>
</comment>
<comment type="similarity">
    <text evidence="13">In the 2nd section; belongs to the CarB family.</text>
</comment>
<comment type="similarity">
    <text evidence="13">In the 3rd section; belongs to the metallo-dependent hydrolases superfamily. DHOase family. CAD subfamily.</text>
</comment>
<comment type="similarity">
    <text evidence="13">In the C-terminal section; belongs to the aspartate/ornithine carbamoyltransferase superfamily. ATCase family.</text>
</comment>
<reference key="1">
    <citation type="journal article" date="1995" name="J. Biol. Chem.">
        <title>Nucleotide sequence and tissue-specific expression of the multifunctional protein carbamoyl-phosphate synthetase-aspartate transcarbamoylase-dihydroorotase (CAD) mRNA in Squalus acanthias.</title>
        <authorList>
            <person name="Hong J."/>
            <person name="Salo W.L."/>
            <person name="Anderson P.M."/>
        </authorList>
    </citation>
    <scope>NUCLEOTIDE SEQUENCE [MRNA]</scope>
    <scope>TISSUE SPECIFICITY</scope>
    <source>
        <tissue>Spleen</tissue>
        <tissue>Testis</tissue>
    </source>
</reference>
<evidence type="ECO:0000250" key="1">
    <source>
        <dbReference type="UniProtKB" id="P00968"/>
    </source>
</evidence>
<evidence type="ECO:0000250" key="2">
    <source>
        <dbReference type="UniProtKB" id="P05020"/>
    </source>
</evidence>
<evidence type="ECO:0000250" key="3">
    <source>
        <dbReference type="UniProtKB" id="P07259"/>
    </source>
</evidence>
<evidence type="ECO:0000250" key="4">
    <source>
        <dbReference type="UniProtKB" id="P08955"/>
    </source>
</evidence>
<evidence type="ECO:0000250" key="5">
    <source>
        <dbReference type="UniProtKB" id="P0A6F1"/>
    </source>
</evidence>
<evidence type="ECO:0000250" key="6">
    <source>
        <dbReference type="UniProtKB" id="P0A786"/>
    </source>
</evidence>
<evidence type="ECO:0000250" key="7">
    <source>
        <dbReference type="UniProtKB" id="P27708"/>
    </source>
</evidence>
<evidence type="ECO:0000255" key="8">
    <source>
        <dbReference type="PROSITE-ProRule" id="PRU00409"/>
    </source>
</evidence>
<evidence type="ECO:0000255" key="9">
    <source>
        <dbReference type="PROSITE-ProRule" id="PRU00605"/>
    </source>
</evidence>
<evidence type="ECO:0000255" key="10">
    <source>
        <dbReference type="PROSITE-ProRule" id="PRU01202"/>
    </source>
</evidence>
<evidence type="ECO:0000256" key="11">
    <source>
        <dbReference type="SAM" id="MobiDB-lite"/>
    </source>
</evidence>
<evidence type="ECO:0000269" key="12">
    <source>
    </source>
</evidence>
<evidence type="ECO:0000305" key="13"/>
<name>PYR1_SQUAC</name>
<sequence>MATLFLDDGSSFKGRLFGASSTVSGEVVFQTGMVGYPEALTDPSYLSQILVLTYPLIGNYGIPKDEEDEHGLSKWFESAKIHAAALVIGENSQNPSHWSSVRSLDQRLKEHGIPALEGIDTRSLTKKIREKGTLLGKLVIDGTDENSLPYDDPNKRHLVKEVSIKEPKVYHPSGNVKIMAVDCGMKYNQIRSLCKRGAAVTVVPWDYLFDSNEFDGLFISNGPGDPEYCQQTINNVKKAISEEKPKPLFGICLGHQILSLAIGAKTYKMKYGNRGHNQPCIHEGTQRCFYTSQNHGFAVEPCSLPRDWSVLFTNANDQSNEGIIHNSKPLFSVQFHPEHKAGPTDLVDLFDIFLECARDVKLGVNLDKTVKGRVISHYSFKNGTENSKTPPGRIQPHKVLILGSGGLSIGQAGEFDYSGSQAIKALKEENVQSVLINPNIATVQTSKGLADKVYFLPITPEYVTQVIMNERPDGILLTFGGQTALNCGVELQKRGVLEKYHVRVLGTPVSSIEMTEDRKIFVEKMAEINEYVVPSEAAFTLEQAQGAAERLGYPVLVRAAFALGGLGSGFAQNKEELVTLVTQAFAHTSQILVDKSLKGWKEIEYEVVRDAYDNCITVCNMENVDPLGIHTGESIVVAPSQTLNDKEYNLLRTTAIKVIRHLGVVGECNIQYALSPESEQYFIIEVNARLSRSSALASKATGYPLAYVAAKLALGIPLPVLRNSVTNSTTANYEPSLDYCVVKVPRWDLSKFLRLSTKIGSSMKSVGEVMAIGRNFEEAFQKALRMVDENCVGFDHTLKPASDEELETPTDKRIFVLAAALRAGYEIDRLYELTKIDKWFLHKMKNIVEYSLKLSELYMKDEVPRHDLLKVKRLGFSDKQIAMAIQSTELAVRRLRQEWKILPVVKQIDTVAAEWPAQTNYLYLTYNGEGHDLDFTKPHVMVIGSGVYRIGSSVEFDWCAVRCIQQLRKMGYKTRMVNYNPETVSTDYDMCDRLYFDEISFEVVMDIYELENPEGIILSMGGQLPNNIAMDLHRQQCRILGTSPESIDTAENRFKFSRMLDTIGISQPRWKELSDTESSKQFCTKVGYPCLIRPSYVLSGVAMNVAYSDNDLEKFLSSAVAVSKEHPVVISKFIQEAKEIDVDAVACDGVVIAVAISEHVENAGVHSGDATLVTPPQDLNQKTTERIKAIVHAIGQELQATGPFNLQLIAKDDQLKVIECNVRVSRSFPFVSKTLGVDMIALATKVIMGEEVEPVGLMTGTGVVGVKVPQFSFSRLAGADVVLGVEMTSTGEVACFGENRYEAYLKAMLSTGFKIPKKNILLSIGSYKNKSELLSTVQSLEQLGYNLYASLGTADFYTEHGVKIKAVDWPFEDTDNGCPLKERHRNIMDYLEENHFDLVINLSMRNSGGRRLSSFVTKGYRTRRLAVDYSVPLIIDIKCTKLFVEALRLVGDTPPVKTHIDSMSSHKLIRLPGLIDVHVHLREPGGTHKEDFASGTAAALAGGVTMVCAMPNTNPAITDQTSFALVQKLATAGARCDFALFLGASSDNADVLPLISNSAAGLKMYLNDTFSTLKMDNVSLWMEHFEKWPKHLPIVVHAERQTVAAILMVAQLYQRPVHICHVARKEEIQIIRAAKQKGVQVTCEVAPHHLFLNEEDLESIGHGKGQVRPMLSTKEDVNALWENLDVIDCFATDHAPHSVEEKNSDSPPPGYPGLETMLPLLLTAVSEGRLTIDDLVKRLYENPRKIFSLPVQENTYVEVDLEQEWIIPSYMQFTKSKWTPFEGKKVKGRVRRVVLRGEVAYIDGQVLVPPGYGQDVRAWPLGVPLPPPPTTVKTPEHSKPTQTETVRTRTASPRRLASSGPAVDARFHLPPRIHRCSDPGLPNAEGEYKEKPVKKFIEQDTVSQDGYIYPPPVSRLLSPQNLAAQAVPHPYSLLLHPFVGQHILSVKRFTKDQLSHLFNVAHNLRLTVQKDRSLDILKGKVMASMFYEVSTRTSSSFRAAMHRLGGSVIHFSEATSSVQKGESLLDSVQTMSCYVDVVVLRHPEPGAVELAAKHSRKPIINAGDGVGEHPTQALLDIFTIREELGTVNGMTITMVGDLKHGRTVHSLAYLLTLYRVNLRYVTPRNLRMPPNIIRFLASRGIKQEEFDSLEEALPDTDVLYMTRIQKERFASEEEYEACFGQFILTPHIMTKGKKKMVVMHPLPRVNEVSVEVDSDPRAAYFRQAENGMYVRMALLATVLGKF</sequence>
<accession>Q91437</accession>